<proteinExistence type="evidence at transcript level"/>
<organism>
    <name type="scientific">Mus musculus</name>
    <name type="common">Mouse</name>
    <dbReference type="NCBI Taxonomy" id="10090"/>
    <lineage>
        <taxon>Eukaryota</taxon>
        <taxon>Metazoa</taxon>
        <taxon>Chordata</taxon>
        <taxon>Craniata</taxon>
        <taxon>Vertebrata</taxon>
        <taxon>Euteleostomi</taxon>
        <taxon>Mammalia</taxon>
        <taxon>Eutheria</taxon>
        <taxon>Euarchontoglires</taxon>
        <taxon>Glires</taxon>
        <taxon>Rodentia</taxon>
        <taxon>Myomorpha</taxon>
        <taxon>Muroidea</taxon>
        <taxon>Muridae</taxon>
        <taxon>Murinae</taxon>
        <taxon>Mus</taxon>
        <taxon>Mus</taxon>
    </lineage>
</organism>
<reference key="1">
    <citation type="journal article" date="2009" name="PLoS Biol.">
        <title>Lineage-specific biology revealed by a finished genome assembly of the mouse.</title>
        <authorList>
            <person name="Church D.M."/>
            <person name="Goodstadt L."/>
            <person name="Hillier L.W."/>
            <person name="Zody M.C."/>
            <person name="Goldstein S."/>
            <person name="She X."/>
            <person name="Bult C.J."/>
            <person name="Agarwala R."/>
            <person name="Cherry J.L."/>
            <person name="DiCuccio M."/>
            <person name="Hlavina W."/>
            <person name="Kapustin Y."/>
            <person name="Meric P."/>
            <person name="Maglott D."/>
            <person name="Birtle Z."/>
            <person name="Marques A.C."/>
            <person name="Graves T."/>
            <person name="Zhou S."/>
            <person name="Teague B."/>
            <person name="Potamousis K."/>
            <person name="Churas C."/>
            <person name="Place M."/>
            <person name="Herschleb J."/>
            <person name="Runnheim R."/>
            <person name="Forrest D."/>
            <person name="Amos-Landgraf J."/>
            <person name="Schwartz D.C."/>
            <person name="Cheng Z."/>
            <person name="Lindblad-Toh K."/>
            <person name="Eichler E.E."/>
            <person name="Ponting C.P."/>
        </authorList>
    </citation>
    <scope>NUCLEOTIDE SEQUENCE [LARGE SCALE GENOMIC DNA]</scope>
    <source>
        <strain>C57BL/6J</strain>
    </source>
</reference>
<reference key="2">
    <citation type="journal article" date="2003" name="Nat. Rev. Genet.">
        <title>Human and mouse proteases: a comparative genomic approach.</title>
        <authorList>
            <person name="Puente X.S."/>
            <person name="Sanchez L.M."/>
            <person name="Overall C.M."/>
            <person name="Lopez-Otin C."/>
        </authorList>
    </citation>
    <scope>IDENTIFICATION</scope>
</reference>
<gene>
    <name evidence="7" type="primary">Zranb1</name>
    <name evidence="7" type="synonym">Trabid</name>
</gene>
<name>ZRAN1_MOUSE</name>
<keyword id="KW-0040">ANK repeat</keyword>
<keyword id="KW-0963">Cytoplasm</keyword>
<keyword id="KW-0378">Hydrolase</keyword>
<keyword id="KW-0479">Metal-binding</keyword>
<keyword id="KW-0539">Nucleus</keyword>
<keyword id="KW-0645">Protease</keyword>
<keyword id="KW-1185">Reference proteome</keyword>
<keyword id="KW-0677">Repeat</keyword>
<keyword id="KW-0788">Thiol protease</keyword>
<keyword id="KW-0833">Ubl conjugation pathway</keyword>
<keyword id="KW-0879">Wnt signaling pathway</keyword>
<keyword id="KW-0862">Zinc</keyword>
<keyword id="KW-0863">Zinc-finger</keyword>
<protein>
    <recommendedName>
        <fullName evidence="6">Ubiquitin thioesterase Zranb1</fullName>
        <ecNumber evidence="2">3.4.19.12</ecNumber>
    </recommendedName>
    <alternativeName>
        <fullName evidence="7">Zinc finger Ran-binding domain-containing protein 1</fullName>
    </alternativeName>
</protein>
<sequence length="708" mass="80934">MSEHGIKWACEYCTYENWPSAIKCTMCRAQRPSGTIITEDPFKSGSSDVGRDWDPSSTEGGSSPLICPDSSARPRVKSSYSMENANKWSCHMCTYLNWPRAIRCTQCLSQRRTRSPTESPQSSGSGSRPVAFSVDPCEEYNDRNKLNTRTQHWTCSVCTYENWAKAKKCVVCDHPRPNNIEAIELAETEEASSIINEQDRARWRGGCSSGNSQRRSPPTTKRDSEVKMDFQRIELAGAVGTKEELEVDFKKLKQIKNRMKKTDWLFLNACVGVVEGDLAAIEAYKSSGGDIARQLTADEVRLLNRPSAFDVGYTLVHLAIRFQRQDMLAILLTEVSQQAAKCIPAMVCPELTEQIRREIAASLHQRKGDFACYFLTDLVTFTLPADIEDLPPTVQEKLFDEVLDRDVQKELEEESPIINWSLELATRLDSRLYALWNRTAGDCLLDSVLQATWGIYDKDSVLRKALHDSLHDCSHWFYTRWKDWESWYSQSFGLHFSLREEQWQEDWAFILSLASQPGASLEQTHIFVLAHILRRPIIVYGVKYYKSFRGETLGYTRFQGVYLPLLWEQSFCWKSPIALGYTRGHFSALVAMENDGYGNRGAGANLNTDDDVTITFLPLVDSERKLLHVHFLSAQELGNEEQQEKLLREWLDCCVTEGGVLVAMQKSSRRRNHPLVTQMVEKWLDRYRQIRPCTSLSDGEEDEDDEDE</sequence>
<comment type="function">
    <text evidence="2">Ubiquitin thioesterase, which specifically hydrolyzes 'Lys-29'-linked and 'Lys-33'-linked diubiquitin (By similarity). Also cleaves 'Lys-63'-linked chains, but with 40-fold less efficiency compared to 'Lys-29'-linked ones (By similarity). Positive regulator of the Wnt signaling pathway that deubiquitinates APC protein, a negative regulator of Wnt-mediated transcription (By similarity). Acts as a regulator of autophagy by mediating deubiquitination of PIK3C3/VPS34, thereby promoting autophagosome maturation (By similarity). Plays a role in the regulation of cell morphology and cytoskeletal organization (By similarity). Required in the stress fiber dynamics and cell migration (By similarity).</text>
</comment>
<comment type="catalytic activity">
    <reaction evidence="2">
        <text>Thiol-dependent hydrolysis of ester, thioester, amide, peptide and isopeptide bonds formed by the C-terminal Gly of ubiquitin (a 76-residue protein attached to proteins as an intracellular targeting signal).</text>
        <dbReference type="EC" id="3.4.19.12"/>
    </reaction>
</comment>
<comment type="subunit">
    <text evidence="2">Interacts with TRAF6. Interacts with APC.</text>
</comment>
<comment type="subcellular location">
    <subcellularLocation>
        <location evidence="2">Cytoplasm</location>
    </subcellularLocation>
    <subcellularLocation>
        <location evidence="2">Nucleus</location>
    </subcellularLocation>
    <text evidence="2">Enriched in punctate localization in the cytoplasm.</text>
</comment>
<comment type="domain">
    <text evidence="2">The RanBP2-type zinc fingers, also called NZFs, mediate the interaction with ubiquitin and determine linkage specificity. RanBP2-type zinc fingers 1 and 2 (also named NZF1 and NZF2) specifically recognize and bind 'Lys-29'- and 'Lys-33'-linked ubiquitin. RanBP2-type zinc finger 3 (also named NZF3) binds 'Lys-33'-linked ubiquitin and shows weak binding to 'Lys-6'-, 'Lys-48'- and 'Lys-63'-linked ubiquitin chains but it does not interact with 'Lys-29'-linked chains.</text>
</comment>
<comment type="domain">
    <text evidence="2">The OTU domain mediates the deubiquitinating activity.</text>
</comment>
<comment type="domain">
    <text evidence="2">The second ankyrin repeat ANK 2 is termed AnkUBD, it interacts with ubiquitin hydrophobic patch and contributes to linkage specificity.</text>
</comment>
<comment type="similarity">
    <text evidence="6">Belongs to the peptidase C64 family.</text>
</comment>
<dbReference type="EC" id="3.4.19.12" evidence="2"/>
<dbReference type="EMBL" id="AC119806">
    <property type="status" value="NOT_ANNOTATED_CDS"/>
    <property type="molecule type" value="Genomic_DNA"/>
</dbReference>
<dbReference type="EMBL" id="BN000126">
    <property type="protein sequence ID" value="CAD67576.1"/>
    <property type="molecule type" value="mRNA"/>
</dbReference>
<dbReference type="CCDS" id="CCDS21929.1"/>
<dbReference type="RefSeq" id="NP_997185.1">
    <property type="nucleotide sequence ID" value="NM_207302.3"/>
</dbReference>
<dbReference type="RefSeq" id="XP_006508030.1">
    <property type="nucleotide sequence ID" value="XM_006507967.3"/>
</dbReference>
<dbReference type="SMR" id="Q7M760"/>
<dbReference type="BioGRID" id="237529">
    <property type="interactions" value="4"/>
</dbReference>
<dbReference type="FunCoup" id="Q7M760">
    <property type="interactions" value="3074"/>
</dbReference>
<dbReference type="STRING" id="10090.ENSMUSP00000101763"/>
<dbReference type="MEROPS" id="C64.004"/>
<dbReference type="iPTMnet" id="Q7M760"/>
<dbReference type="PhosphoSitePlus" id="Q7M760"/>
<dbReference type="jPOST" id="Q7M760"/>
<dbReference type="PaxDb" id="10090-ENSMUSP00000101763"/>
<dbReference type="ProteomicsDB" id="275161"/>
<dbReference type="Antibodypedia" id="35158">
    <property type="antibodies" value="164 antibodies from 26 providers"/>
</dbReference>
<dbReference type="DNASU" id="360216"/>
<dbReference type="Ensembl" id="ENSMUST00000033265.5">
    <property type="protein sequence ID" value="ENSMUSP00000033265.5"/>
    <property type="gene ID" value="ENSMUSG00000030967.16"/>
</dbReference>
<dbReference type="Ensembl" id="ENSMUST00000106157.8">
    <property type="protein sequence ID" value="ENSMUSP00000101763.2"/>
    <property type="gene ID" value="ENSMUSG00000030967.16"/>
</dbReference>
<dbReference type="GeneID" id="360216"/>
<dbReference type="KEGG" id="mmu:360216"/>
<dbReference type="UCSC" id="uc009kcv.2">
    <property type="organism name" value="mouse"/>
</dbReference>
<dbReference type="AGR" id="MGI:106441"/>
<dbReference type="CTD" id="54764"/>
<dbReference type="MGI" id="MGI:106441">
    <property type="gene designation" value="Zranb1"/>
</dbReference>
<dbReference type="VEuPathDB" id="HostDB:ENSMUSG00000030967"/>
<dbReference type="eggNOG" id="KOG4345">
    <property type="taxonomic scope" value="Eukaryota"/>
</dbReference>
<dbReference type="GeneTree" id="ENSGT00940000158045"/>
<dbReference type="HOGENOM" id="CLU_013907_0_0_1"/>
<dbReference type="InParanoid" id="Q7M760"/>
<dbReference type="OMA" id="MCDTKDD"/>
<dbReference type="PhylomeDB" id="Q7M760"/>
<dbReference type="TreeFam" id="TF323312"/>
<dbReference type="Reactome" id="R-MMU-195253">
    <property type="pathway name" value="Degradation of beta-catenin by the destruction complex"/>
</dbReference>
<dbReference type="Reactome" id="R-MMU-5689896">
    <property type="pathway name" value="Ovarian tumor domain proteases"/>
</dbReference>
<dbReference type="BioGRID-ORCS" id="360216">
    <property type="hits" value="10 hits in 78 CRISPR screens"/>
</dbReference>
<dbReference type="ChiTaRS" id="Zranb1">
    <property type="organism name" value="mouse"/>
</dbReference>
<dbReference type="PRO" id="PR:Q7M760"/>
<dbReference type="Proteomes" id="UP000000589">
    <property type="component" value="Chromosome 7"/>
</dbReference>
<dbReference type="RNAct" id="Q7M760">
    <property type="molecule type" value="protein"/>
</dbReference>
<dbReference type="Bgee" id="ENSMUSG00000030967">
    <property type="expression patterns" value="Expressed in rostral migratory stream and 268 other cell types or tissues"/>
</dbReference>
<dbReference type="ExpressionAtlas" id="Q7M760">
    <property type="expression patterns" value="baseline and differential"/>
</dbReference>
<dbReference type="GO" id="GO:0005737">
    <property type="term" value="C:cytoplasm"/>
    <property type="evidence" value="ECO:0000250"/>
    <property type="project" value="UniProtKB"/>
</dbReference>
<dbReference type="GO" id="GO:0005829">
    <property type="term" value="C:cytosol"/>
    <property type="evidence" value="ECO:0007669"/>
    <property type="project" value="Ensembl"/>
</dbReference>
<dbReference type="GO" id="GO:0005654">
    <property type="term" value="C:nucleoplasm"/>
    <property type="evidence" value="ECO:0007669"/>
    <property type="project" value="Ensembl"/>
</dbReference>
<dbReference type="GO" id="GO:0005634">
    <property type="term" value="C:nucleus"/>
    <property type="evidence" value="ECO:0000250"/>
    <property type="project" value="UniProtKB"/>
</dbReference>
<dbReference type="GO" id="GO:0004843">
    <property type="term" value="F:cysteine-type deubiquitinase activity"/>
    <property type="evidence" value="ECO:0000250"/>
    <property type="project" value="UniProtKB"/>
</dbReference>
<dbReference type="GO" id="GO:0070530">
    <property type="term" value="F:K63-linked polyubiquitin modification-dependent protein binding"/>
    <property type="evidence" value="ECO:0007669"/>
    <property type="project" value="Ensembl"/>
</dbReference>
<dbReference type="GO" id="GO:0008270">
    <property type="term" value="F:zinc ion binding"/>
    <property type="evidence" value="ECO:0007669"/>
    <property type="project" value="UniProtKB-KW"/>
</dbReference>
<dbReference type="GO" id="GO:0016477">
    <property type="term" value="P:cell migration"/>
    <property type="evidence" value="ECO:0000250"/>
    <property type="project" value="UniProtKB"/>
</dbReference>
<dbReference type="GO" id="GO:0007010">
    <property type="term" value="P:cytoskeleton organization"/>
    <property type="evidence" value="ECO:0000250"/>
    <property type="project" value="UniProtKB"/>
</dbReference>
<dbReference type="GO" id="GO:0030177">
    <property type="term" value="P:positive regulation of Wnt signaling pathway"/>
    <property type="evidence" value="ECO:0000250"/>
    <property type="project" value="UniProtKB"/>
</dbReference>
<dbReference type="GO" id="GO:0071947">
    <property type="term" value="P:protein deubiquitination involved in ubiquitin-dependent protein catabolic process"/>
    <property type="evidence" value="ECO:0007669"/>
    <property type="project" value="Ensembl"/>
</dbReference>
<dbReference type="GO" id="GO:0035523">
    <property type="term" value="P:protein K29-linked deubiquitination"/>
    <property type="evidence" value="ECO:0000250"/>
    <property type="project" value="UniProtKB"/>
</dbReference>
<dbReference type="GO" id="GO:1990168">
    <property type="term" value="P:protein K33-linked deubiquitination"/>
    <property type="evidence" value="ECO:0000250"/>
    <property type="project" value="UniProtKB"/>
</dbReference>
<dbReference type="GO" id="GO:0070536">
    <property type="term" value="P:protein K63-linked deubiquitination"/>
    <property type="evidence" value="ECO:0000250"/>
    <property type="project" value="UniProtKB"/>
</dbReference>
<dbReference type="GO" id="GO:0022604">
    <property type="term" value="P:regulation of cell morphogenesis"/>
    <property type="evidence" value="ECO:0000250"/>
    <property type="project" value="UniProtKB"/>
</dbReference>
<dbReference type="GO" id="GO:0016055">
    <property type="term" value="P:Wnt signaling pathway"/>
    <property type="evidence" value="ECO:0007669"/>
    <property type="project" value="UniProtKB-KW"/>
</dbReference>
<dbReference type="CDD" id="cd22767">
    <property type="entry name" value="OTU_ZRANB1"/>
    <property type="match status" value="1"/>
</dbReference>
<dbReference type="FunFam" id="1.25.40.560:FF:000001">
    <property type="entry name" value="ubiquitin thioesterase ZRANB1 isoform X1"/>
    <property type="match status" value="1"/>
</dbReference>
<dbReference type="FunFam" id="4.10.1060.10:FF:000006">
    <property type="entry name" value="ubiquitin thioesterase ZRANB1 isoform X1"/>
    <property type="match status" value="1"/>
</dbReference>
<dbReference type="FunFam" id="4.10.1060.10:FF:000011">
    <property type="entry name" value="ubiquitin thioesterase ZRANB1 isoform X1"/>
    <property type="match status" value="1"/>
</dbReference>
<dbReference type="FunFam" id="4.10.1060.10:FF:000012">
    <property type="entry name" value="ubiquitin thioesterase ZRANB1 isoform X1"/>
    <property type="match status" value="1"/>
</dbReference>
<dbReference type="Gene3D" id="1.25.40.560">
    <property type="match status" value="1"/>
</dbReference>
<dbReference type="Gene3D" id="4.10.1060.10">
    <property type="entry name" value="Zinc finger, RanBP2-type"/>
    <property type="match status" value="3"/>
</dbReference>
<dbReference type="InterPro" id="IPR041294">
    <property type="entry name" value="AnkUBD"/>
</dbReference>
<dbReference type="InterPro" id="IPR051346">
    <property type="entry name" value="OTU_Deubiquitinase"/>
</dbReference>
<dbReference type="InterPro" id="IPR003323">
    <property type="entry name" value="OTU_dom"/>
</dbReference>
<dbReference type="InterPro" id="IPR001876">
    <property type="entry name" value="Znf_RanBP2"/>
</dbReference>
<dbReference type="InterPro" id="IPR036443">
    <property type="entry name" value="Znf_RanBP2_sf"/>
</dbReference>
<dbReference type="InterPro" id="IPR049768">
    <property type="entry name" value="ZRANB1_OTU"/>
</dbReference>
<dbReference type="PANTHER" id="PTHR13367">
    <property type="entry name" value="UBIQUITIN THIOESTERASE"/>
    <property type="match status" value="1"/>
</dbReference>
<dbReference type="PANTHER" id="PTHR13367:SF28">
    <property type="entry name" value="UBIQUITIN THIOESTERASE ZRANB1"/>
    <property type="match status" value="1"/>
</dbReference>
<dbReference type="Pfam" id="PF18418">
    <property type="entry name" value="AnkUBD"/>
    <property type="match status" value="1"/>
</dbReference>
<dbReference type="Pfam" id="PF02338">
    <property type="entry name" value="OTU"/>
    <property type="match status" value="1"/>
</dbReference>
<dbReference type="Pfam" id="PF00641">
    <property type="entry name" value="Zn_ribbon_RanBP"/>
    <property type="match status" value="2"/>
</dbReference>
<dbReference type="SMART" id="SM00547">
    <property type="entry name" value="ZnF_RBZ"/>
    <property type="match status" value="3"/>
</dbReference>
<dbReference type="SUPFAM" id="SSF90209">
    <property type="entry name" value="Ran binding protein zinc finger-like"/>
    <property type="match status" value="2"/>
</dbReference>
<dbReference type="PROSITE" id="PS50802">
    <property type="entry name" value="OTU"/>
    <property type="match status" value="1"/>
</dbReference>
<dbReference type="PROSITE" id="PS01358">
    <property type="entry name" value="ZF_RANBP2_1"/>
    <property type="match status" value="3"/>
</dbReference>
<dbReference type="PROSITE" id="PS50199">
    <property type="entry name" value="ZF_RANBP2_2"/>
    <property type="match status" value="3"/>
</dbReference>
<evidence type="ECO:0000250" key="1">
    <source>
        <dbReference type="UniProtKB" id="Q6GQQ9"/>
    </source>
</evidence>
<evidence type="ECO:0000250" key="2">
    <source>
        <dbReference type="UniProtKB" id="Q9UGI0"/>
    </source>
</evidence>
<evidence type="ECO:0000255" key="3">
    <source>
        <dbReference type="PROSITE-ProRule" id="PRU00139"/>
    </source>
</evidence>
<evidence type="ECO:0000255" key="4">
    <source>
        <dbReference type="PROSITE-ProRule" id="PRU00322"/>
    </source>
</evidence>
<evidence type="ECO:0000256" key="5">
    <source>
        <dbReference type="SAM" id="MobiDB-lite"/>
    </source>
</evidence>
<evidence type="ECO:0000305" key="6"/>
<evidence type="ECO:0000312" key="7">
    <source>
        <dbReference type="MGI" id="MGI:106441"/>
    </source>
</evidence>
<accession>Q7M760</accession>
<feature type="chain" id="PRO_0000361554" description="Ubiquitin thioesterase Zranb1">
    <location>
        <begin position="1"/>
        <end position="708"/>
    </location>
</feature>
<feature type="repeat" description="ANK 1">
    <location>
        <begin position="260"/>
        <end position="290"/>
    </location>
</feature>
<feature type="repeat" description="ANK 2">
    <location>
        <begin position="313"/>
        <end position="340"/>
    </location>
</feature>
<feature type="domain" description="OTU" evidence="3">
    <location>
        <begin position="432"/>
        <end position="592"/>
    </location>
</feature>
<feature type="zinc finger region" description="RanBP2-type 1" evidence="4">
    <location>
        <begin position="3"/>
        <end position="33"/>
    </location>
</feature>
<feature type="zinc finger region" description="RanBP2-type 2" evidence="4">
    <location>
        <begin position="84"/>
        <end position="113"/>
    </location>
</feature>
<feature type="zinc finger region" description="RanBP2-type 3" evidence="4">
    <location>
        <begin position="149"/>
        <end position="178"/>
    </location>
</feature>
<feature type="region of interest" description="Disordered" evidence="5">
    <location>
        <begin position="38"/>
        <end position="73"/>
    </location>
</feature>
<feature type="region of interest" description="Disordered" evidence="5">
    <location>
        <begin position="202"/>
        <end position="224"/>
    </location>
</feature>
<feature type="compositionally biased region" description="Polar residues" evidence="5">
    <location>
        <begin position="209"/>
        <end position="219"/>
    </location>
</feature>
<feature type="active site" description="Nucleophile" evidence="2">
    <location>
        <position position="443"/>
    </location>
</feature>
<feature type="active site" description="Proton acceptor" evidence="1">
    <location>
        <position position="585"/>
    </location>
</feature>
<feature type="binding site" evidence="4">
    <location>
        <position position="10"/>
    </location>
    <ligand>
        <name>Zn(2+)</name>
        <dbReference type="ChEBI" id="CHEBI:29105"/>
        <label>1</label>
    </ligand>
</feature>
<feature type="binding site" evidence="4">
    <location>
        <position position="13"/>
    </location>
    <ligand>
        <name>Zn(2+)</name>
        <dbReference type="ChEBI" id="CHEBI:29105"/>
        <label>1</label>
    </ligand>
</feature>
<feature type="binding site" evidence="4">
    <location>
        <position position="24"/>
    </location>
    <ligand>
        <name>Zn(2+)</name>
        <dbReference type="ChEBI" id="CHEBI:29105"/>
        <label>1</label>
    </ligand>
</feature>
<feature type="binding site" evidence="4">
    <location>
        <position position="27"/>
    </location>
    <ligand>
        <name>Zn(2+)</name>
        <dbReference type="ChEBI" id="CHEBI:29105"/>
        <label>1</label>
    </ligand>
</feature>
<feature type="binding site" evidence="4">
    <location>
        <position position="90"/>
    </location>
    <ligand>
        <name>Zn(2+)</name>
        <dbReference type="ChEBI" id="CHEBI:29105"/>
        <label>2</label>
    </ligand>
</feature>
<feature type="binding site" evidence="4">
    <location>
        <position position="93"/>
    </location>
    <ligand>
        <name>Zn(2+)</name>
        <dbReference type="ChEBI" id="CHEBI:29105"/>
        <label>2</label>
    </ligand>
</feature>
<feature type="binding site" evidence="4">
    <location>
        <position position="104"/>
    </location>
    <ligand>
        <name>Zn(2+)</name>
        <dbReference type="ChEBI" id="CHEBI:29105"/>
        <label>2</label>
    </ligand>
</feature>
<feature type="binding site" evidence="4">
    <location>
        <position position="107"/>
    </location>
    <ligand>
        <name>Zn(2+)</name>
        <dbReference type="ChEBI" id="CHEBI:29105"/>
        <label>2</label>
    </ligand>
</feature>
<feature type="binding site" evidence="4">
    <location>
        <position position="155"/>
    </location>
    <ligand>
        <name>Zn(2+)</name>
        <dbReference type="ChEBI" id="CHEBI:29105"/>
        <label>3</label>
    </ligand>
</feature>
<feature type="binding site" evidence="4">
    <location>
        <position position="158"/>
    </location>
    <ligand>
        <name>Zn(2+)</name>
        <dbReference type="ChEBI" id="CHEBI:29105"/>
        <label>3</label>
    </ligand>
</feature>
<feature type="binding site" evidence="4">
    <location>
        <position position="169"/>
    </location>
    <ligand>
        <name>Zn(2+)</name>
        <dbReference type="ChEBI" id="CHEBI:29105"/>
        <label>3</label>
    </ligand>
</feature>
<feature type="binding site" evidence="4">
    <location>
        <position position="172"/>
    </location>
    <ligand>
        <name>Zn(2+)</name>
        <dbReference type="ChEBI" id="CHEBI:29105"/>
        <label>3</label>
    </ligand>
</feature>